<proteinExistence type="evidence at protein level"/>
<reference evidence="15" key="1">
    <citation type="submission" date="2002-09" db="EMBL/GenBank/DDBJ databases">
        <title>Btk expressed in primary chicken erythroblasts.</title>
        <authorList>
            <person name="Schmidt U."/>
            <person name="Haubenwallner S."/>
            <person name="Beug H."/>
            <person name="Nimpf J."/>
        </authorList>
    </citation>
    <scope>NUCLEOTIDE SEQUENCE [MRNA]</scope>
</reference>
<reference key="2">
    <citation type="journal article" date="1996" name="J. Exp. Med.">
        <title>A role for Bruton's tyrosine kinase in B cell antigen receptor-mediated activation of phospholipase C-gamma 2.</title>
        <authorList>
            <person name="Takata M."/>
            <person name="Kurosaki T."/>
        </authorList>
    </citation>
    <scope>FUNCTION IN PHOSPHORYLATION OF PLCG2</scope>
</reference>
<reference key="3">
    <citation type="journal article" date="1999" name="Proc. Natl. Acad. Sci. U.S.A.">
        <title>Bruton's tyrosine kinase activity is negatively regulated by Sab, the Btk-SH3 domain-binding protein.</title>
        <authorList>
            <person name="Yamadori T."/>
            <person name="Baba Y."/>
            <person name="Mastushita M."/>
            <person name="Hashimoto S."/>
            <person name="Kurosaki M."/>
            <person name="Kurosaki T."/>
            <person name="Kishimoto T."/>
            <person name="Tsukada S."/>
        </authorList>
    </citation>
    <scope>ACTIVITY REGULATION</scope>
</reference>
<reference key="4">
    <citation type="journal article" date="2000" name="J. Exp. Med.">
        <title>Bruton's tyrosine kinase links the B cell receptor to nuclear factor kappaB activation.</title>
        <authorList>
            <person name="Bajpai U.D."/>
            <person name="Zhang K."/>
            <person name="Teutsch M."/>
            <person name="Sen R."/>
            <person name="Wortis H.H."/>
        </authorList>
    </citation>
    <scope>FUNCTION IN REGULATION OF THE ACTIVITY OF NF-KAPPA-B</scope>
</reference>
<reference key="5">
    <citation type="journal article" date="2003" name="EMBO J.">
        <title>Differential regulation of NFAT and SRF by the B cell receptor via a PLCgamma-Ca(2+)-dependent pathway.</title>
        <authorList>
            <person name="Hao S."/>
            <person name="Kurosaki T."/>
            <person name="August A."/>
        </authorList>
    </citation>
    <scope>FUNCTION</scope>
</reference>
<reference key="6">
    <citation type="journal article" date="1998" name="Biochem. Pharmacol.">
        <title>Bruton's tyrosine kinase (BTK) as a dual-function regulator of apoptosis.</title>
        <authorList>
            <person name="Uckun F.M."/>
        </authorList>
    </citation>
    <scope>REVIEW ON FUNCTION IN REGULATION OF APOPTOSIS</scope>
</reference>
<reference key="7">
    <citation type="journal article" date="2009" name="Immunol. Rev.">
        <title>Bruton's tyrosine kinase (Btk): function, regulation, and transformation with special emphasis on the PH domain.</title>
        <authorList>
            <person name="Mohamed A.J."/>
            <person name="Yu L."/>
            <person name="Backesjo C.M."/>
            <person name="Vargas L."/>
            <person name="Faryal R."/>
            <person name="Aints A."/>
            <person name="Christensson B."/>
            <person name="Berglof A."/>
            <person name="Vihinen M."/>
            <person name="Nore B.F."/>
            <person name="Smith C.I."/>
        </authorList>
    </citation>
    <scope>REVIEW ON FUNCTION</scope>
    <scope>REVIEW ON ACTIVITY REGULATION</scope>
</reference>
<accession>Q8JH64</accession>
<evidence type="ECO:0000250" key="1">
    <source>
        <dbReference type="UniProtKB" id="P08631"/>
    </source>
</evidence>
<evidence type="ECO:0000250" key="2">
    <source>
        <dbReference type="UniProtKB" id="P35991"/>
    </source>
</evidence>
<evidence type="ECO:0000250" key="3">
    <source>
        <dbReference type="UniProtKB" id="Q06187"/>
    </source>
</evidence>
<evidence type="ECO:0000255" key="4">
    <source>
        <dbReference type="PROSITE-ProRule" id="PRU00145"/>
    </source>
</evidence>
<evidence type="ECO:0000255" key="5">
    <source>
        <dbReference type="PROSITE-ProRule" id="PRU00159"/>
    </source>
</evidence>
<evidence type="ECO:0000255" key="6">
    <source>
        <dbReference type="PROSITE-ProRule" id="PRU00191"/>
    </source>
</evidence>
<evidence type="ECO:0000255" key="7">
    <source>
        <dbReference type="PROSITE-ProRule" id="PRU00192"/>
    </source>
</evidence>
<evidence type="ECO:0000255" key="8">
    <source>
        <dbReference type="PROSITE-ProRule" id="PRU00432"/>
    </source>
</evidence>
<evidence type="ECO:0000255" key="9">
    <source>
        <dbReference type="PROSITE-ProRule" id="PRU10028"/>
    </source>
</evidence>
<evidence type="ECO:0000256" key="10">
    <source>
        <dbReference type="SAM" id="MobiDB-lite"/>
    </source>
</evidence>
<evidence type="ECO:0000269" key="11">
    <source>
    </source>
</evidence>
<evidence type="ECO:0000269" key="12">
    <source>
    </source>
</evidence>
<evidence type="ECO:0000269" key="13">
    <source>
    </source>
</evidence>
<evidence type="ECO:0000305" key="14"/>
<evidence type="ECO:0000312" key="15">
    <source>
        <dbReference type="EMBL" id="AAN04043.2"/>
    </source>
</evidence>
<protein>
    <recommendedName>
        <fullName>Tyrosine-protein kinase BTK</fullName>
        <ecNumber>2.7.10.2</ecNumber>
    </recommendedName>
    <alternativeName>
        <fullName>Bruton tyrosine kinase</fullName>
    </alternativeName>
</protein>
<sequence>MASIILESIFLKRSQQKKKTSPLNFKKRLFLLTESKLSYYEYDFERGRRGSKKGSVDIEKITCVETVVPENNPPPERQVPKKGEDYNMEQISIIERFPYPFQVVYDEGPLYVFSPTEELRKRWIHQLKSVIRYNSDLVQKYHPCFWIDGQYLCCSQTAKNAMGCKILESRNGSLKAGRSHRKTKKPLPPTPEEDTMVMKPLPPEPAPSAAGEMKKVVALYNYVPMNVQDLQLQKGEDYLILEESHLPWWKARDKNGREGYIPSNYVTATSNSLEIYEWYSKNITRSQAEQLLKQEGKEGGFIVRDSTSKTGKYTVSVYAKSAVDPQGMIRHYVVCCTPQNQYYLAEKHLFNTIPELITYHQHNSAGLISRLKYPVSRHQKSAPSTAGLGYGSWEIDPKDLTFLKELGTGQFGVVKYGKWRGQYNVAIKMIREGSMSEDEFIDEAKVMMNLSHEKLVQLYGVCTKQRPIFIITEYMANGCLLNFLRETQRRFQPAELLEMCKDVCEAMEYLESKQFLHRDLAARNCLVNDQGIVKVSDFGLSRYVLDDEYTSSMGSKFPVRWSPPEVLLYSKFSSKSDVWSFGVLMWEVYSLGKMPYERFNNSETTEHVIQGLRLYRPQQASERVYAIMYSCWHEKAEERPTFSALLGSIVDITDEEP</sequence>
<keyword id="KW-0007">Acetylation</keyword>
<keyword id="KW-1064">Adaptive immunity</keyword>
<keyword id="KW-0067">ATP-binding</keyword>
<keyword id="KW-1003">Cell membrane</keyword>
<keyword id="KW-0963">Cytoplasm</keyword>
<keyword id="KW-0391">Immunity</keyword>
<keyword id="KW-0399">Innate immunity</keyword>
<keyword id="KW-0418">Kinase</keyword>
<keyword id="KW-0446">Lipid-binding</keyword>
<keyword id="KW-0472">Membrane</keyword>
<keyword id="KW-0479">Metal-binding</keyword>
<keyword id="KW-0547">Nucleotide-binding</keyword>
<keyword id="KW-0539">Nucleus</keyword>
<keyword id="KW-0597">Phosphoprotein</keyword>
<keyword id="KW-1185">Reference proteome</keyword>
<keyword id="KW-0727">SH2 domain</keyword>
<keyword id="KW-0728">SH3 domain</keyword>
<keyword id="KW-0804">Transcription</keyword>
<keyword id="KW-0805">Transcription regulation</keyword>
<keyword id="KW-0808">Transferase</keyword>
<keyword id="KW-0829">Tyrosine-protein kinase</keyword>
<keyword id="KW-0862">Zinc</keyword>
<keyword id="KW-0863">Zinc-finger</keyword>
<dbReference type="EC" id="2.7.10.2"/>
<dbReference type="EMBL" id="AF535118">
    <property type="protein sequence ID" value="AAN04043.2"/>
    <property type="molecule type" value="mRNA"/>
</dbReference>
<dbReference type="SMR" id="Q8JH64"/>
<dbReference type="FunCoup" id="Q8JH64">
    <property type="interactions" value="294"/>
</dbReference>
<dbReference type="STRING" id="9031.ENSGALP00000045102"/>
<dbReference type="GlyGen" id="Q8JH64">
    <property type="glycosylation" value="1 site"/>
</dbReference>
<dbReference type="PaxDb" id="9031-ENSGALP00000007936"/>
<dbReference type="VEuPathDB" id="HostDB:geneid_374075"/>
<dbReference type="eggNOG" id="KOG0197">
    <property type="taxonomic scope" value="Eukaryota"/>
</dbReference>
<dbReference type="InParanoid" id="Q8JH64"/>
<dbReference type="OrthoDB" id="4062651at2759"/>
<dbReference type="Proteomes" id="UP000000539">
    <property type="component" value="Unassembled WGS sequence"/>
</dbReference>
<dbReference type="GO" id="GO:0005829">
    <property type="term" value="C:cytosol"/>
    <property type="evidence" value="ECO:0000304"/>
    <property type="project" value="Reactome"/>
</dbReference>
<dbReference type="GO" id="GO:0045121">
    <property type="term" value="C:membrane raft"/>
    <property type="evidence" value="ECO:0000250"/>
    <property type="project" value="UniProtKB"/>
</dbReference>
<dbReference type="GO" id="GO:0005634">
    <property type="term" value="C:nucleus"/>
    <property type="evidence" value="ECO:0007669"/>
    <property type="project" value="UniProtKB-SubCell"/>
</dbReference>
<dbReference type="GO" id="GO:0005886">
    <property type="term" value="C:plasma membrane"/>
    <property type="evidence" value="ECO:0000318"/>
    <property type="project" value="GO_Central"/>
</dbReference>
<dbReference type="GO" id="GO:0005524">
    <property type="term" value="F:ATP binding"/>
    <property type="evidence" value="ECO:0007669"/>
    <property type="project" value="UniProtKB-KW"/>
</dbReference>
<dbReference type="GO" id="GO:0008289">
    <property type="term" value="F:lipid binding"/>
    <property type="evidence" value="ECO:0007669"/>
    <property type="project" value="UniProtKB-KW"/>
</dbReference>
<dbReference type="GO" id="GO:0004715">
    <property type="term" value="F:non-membrane spanning protein tyrosine kinase activity"/>
    <property type="evidence" value="ECO:0000318"/>
    <property type="project" value="GO_Central"/>
</dbReference>
<dbReference type="GO" id="GO:0004713">
    <property type="term" value="F:protein tyrosine kinase activity"/>
    <property type="evidence" value="ECO:0000250"/>
    <property type="project" value="UniProtKB"/>
</dbReference>
<dbReference type="GO" id="GO:0008270">
    <property type="term" value="F:zinc ion binding"/>
    <property type="evidence" value="ECO:0007669"/>
    <property type="project" value="UniProtKB-KW"/>
</dbReference>
<dbReference type="GO" id="GO:0002250">
    <property type="term" value="P:adaptive immune response"/>
    <property type="evidence" value="ECO:0000318"/>
    <property type="project" value="GO_Central"/>
</dbReference>
<dbReference type="GO" id="GO:0050853">
    <property type="term" value="P:B cell receptor signaling pathway"/>
    <property type="evidence" value="ECO:0000318"/>
    <property type="project" value="GO_Central"/>
</dbReference>
<dbReference type="GO" id="GO:0045087">
    <property type="term" value="P:innate immune response"/>
    <property type="evidence" value="ECO:0007669"/>
    <property type="project" value="UniProtKB-KW"/>
</dbReference>
<dbReference type="GO" id="GO:0035556">
    <property type="term" value="P:intracellular signal transduction"/>
    <property type="evidence" value="ECO:0007669"/>
    <property type="project" value="InterPro"/>
</dbReference>
<dbReference type="GO" id="GO:1900227">
    <property type="term" value="P:positive regulation of NLRP3 inflammasome complex assembly"/>
    <property type="evidence" value="ECO:0000250"/>
    <property type="project" value="UniProtKB"/>
</dbReference>
<dbReference type="GO" id="GO:0050852">
    <property type="term" value="P:T cell receptor signaling pathway"/>
    <property type="evidence" value="ECO:0000318"/>
    <property type="project" value="GO_Central"/>
</dbReference>
<dbReference type="CDD" id="cd01238">
    <property type="entry name" value="PH_Btk"/>
    <property type="match status" value="1"/>
</dbReference>
<dbReference type="CDD" id="cd05113">
    <property type="entry name" value="PTKc_Btk_Bmx"/>
    <property type="match status" value="1"/>
</dbReference>
<dbReference type="CDD" id="cd10397">
    <property type="entry name" value="SH2_Tec_Btk"/>
    <property type="match status" value="1"/>
</dbReference>
<dbReference type="CDD" id="cd11906">
    <property type="entry name" value="SH3_BTK"/>
    <property type="match status" value="1"/>
</dbReference>
<dbReference type="FunFam" id="1.10.510.10:FF:000052">
    <property type="entry name" value="Tyrosine-protein kinase"/>
    <property type="match status" value="1"/>
</dbReference>
<dbReference type="FunFam" id="2.30.29.30:FF:000191">
    <property type="entry name" value="Tyrosine-protein kinase"/>
    <property type="match status" value="1"/>
</dbReference>
<dbReference type="FunFam" id="2.30.30.40:FF:000125">
    <property type="entry name" value="Tyrosine-protein kinase"/>
    <property type="match status" value="1"/>
</dbReference>
<dbReference type="FunFam" id="3.30.200.20:FF:000053">
    <property type="entry name" value="Tyrosine-protein kinase"/>
    <property type="match status" value="1"/>
</dbReference>
<dbReference type="FunFam" id="3.30.505.10:FF:000040">
    <property type="entry name" value="Tyrosine-protein kinase"/>
    <property type="match status" value="1"/>
</dbReference>
<dbReference type="Gene3D" id="2.30.29.30">
    <property type="entry name" value="Pleckstrin-homology domain (PH domain)/Phosphotyrosine-binding domain (PTB)"/>
    <property type="match status" value="1"/>
</dbReference>
<dbReference type="Gene3D" id="3.30.505.10">
    <property type="entry name" value="SH2 domain"/>
    <property type="match status" value="1"/>
</dbReference>
<dbReference type="Gene3D" id="2.30.30.40">
    <property type="entry name" value="SH3 Domains"/>
    <property type="match status" value="1"/>
</dbReference>
<dbReference type="Gene3D" id="1.10.510.10">
    <property type="entry name" value="Transferase(Phosphotransferase) domain 1"/>
    <property type="match status" value="1"/>
</dbReference>
<dbReference type="InterPro" id="IPR035574">
    <property type="entry name" value="BTK_SH3"/>
</dbReference>
<dbReference type="InterPro" id="IPR011009">
    <property type="entry name" value="Kinase-like_dom_sf"/>
</dbReference>
<dbReference type="InterPro" id="IPR050198">
    <property type="entry name" value="Non-receptor_tyrosine_kinases"/>
</dbReference>
<dbReference type="InterPro" id="IPR011993">
    <property type="entry name" value="PH-like_dom_sf"/>
</dbReference>
<dbReference type="InterPro" id="IPR001849">
    <property type="entry name" value="PH_domain"/>
</dbReference>
<dbReference type="InterPro" id="IPR000719">
    <property type="entry name" value="Prot_kinase_dom"/>
</dbReference>
<dbReference type="InterPro" id="IPR017441">
    <property type="entry name" value="Protein_kinase_ATP_BS"/>
</dbReference>
<dbReference type="InterPro" id="IPR001245">
    <property type="entry name" value="Ser-Thr/Tyr_kinase_cat_dom"/>
</dbReference>
<dbReference type="InterPro" id="IPR000980">
    <property type="entry name" value="SH2"/>
</dbReference>
<dbReference type="InterPro" id="IPR036860">
    <property type="entry name" value="SH2_dom_sf"/>
</dbReference>
<dbReference type="InterPro" id="IPR036028">
    <property type="entry name" value="SH3-like_dom_sf"/>
</dbReference>
<dbReference type="InterPro" id="IPR001452">
    <property type="entry name" value="SH3_domain"/>
</dbReference>
<dbReference type="InterPro" id="IPR008266">
    <property type="entry name" value="Tyr_kinase_AS"/>
</dbReference>
<dbReference type="InterPro" id="IPR020635">
    <property type="entry name" value="Tyr_kinase_cat_dom"/>
</dbReference>
<dbReference type="InterPro" id="IPR001562">
    <property type="entry name" value="Znf_Btk_motif"/>
</dbReference>
<dbReference type="PANTHER" id="PTHR24418">
    <property type="entry name" value="TYROSINE-PROTEIN KINASE"/>
    <property type="match status" value="1"/>
</dbReference>
<dbReference type="Pfam" id="PF00779">
    <property type="entry name" value="BTK"/>
    <property type="match status" value="1"/>
</dbReference>
<dbReference type="Pfam" id="PF00169">
    <property type="entry name" value="PH"/>
    <property type="match status" value="1"/>
</dbReference>
<dbReference type="Pfam" id="PF07714">
    <property type="entry name" value="PK_Tyr_Ser-Thr"/>
    <property type="match status" value="1"/>
</dbReference>
<dbReference type="Pfam" id="PF00017">
    <property type="entry name" value="SH2"/>
    <property type="match status" value="1"/>
</dbReference>
<dbReference type="Pfam" id="PF00018">
    <property type="entry name" value="SH3_1"/>
    <property type="match status" value="1"/>
</dbReference>
<dbReference type="PRINTS" id="PR00401">
    <property type="entry name" value="SH2DOMAIN"/>
</dbReference>
<dbReference type="PRINTS" id="PR00452">
    <property type="entry name" value="SH3DOMAIN"/>
</dbReference>
<dbReference type="PRINTS" id="PR00402">
    <property type="entry name" value="TECBTKDOMAIN"/>
</dbReference>
<dbReference type="PRINTS" id="PR00109">
    <property type="entry name" value="TYRKINASE"/>
</dbReference>
<dbReference type="SMART" id="SM00107">
    <property type="entry name" value="BTK"/>
    <property type="match status" value="1"/>
</dbReference>
<dbReference type="SMART" id="SM00233">
    <property type="entry name" value="PH"/>
    <property type="match status" value="1"/>
</dbReference>
<dbReference type="SMART" id="SM00252">
    <property type="entry name" value="SH2"/>
    <property type="match status" value="1"/>
</dbReference>
<dbReference type="SMART" id="SM00326">
    <property type="entry name" value="SH3"/>
    <property type="match status" value="1"/>
</dbReference>
<dbReference type="SMART" id="SM00219">
    <property type="entry name" value="TyrKc"/>
    <property type="match status" value="1"/>
</dbReference>
<dbReference type="SUPFAM" id="SSF50729">
    <property type="entry name" value="PH domain-like"/>
    <property type="match status" value="1"/>
</dbReference>
<dbReference type="SUPFAM" id="SSF56112">
    <property type="entry name" value="Protein kinase-like (PK-like)"/>
    <property type="match status" value="1"/>
</dbReference>
<dbReference type="SUPFAM" id="SSF55550">
    <property type="entry name" value="SH2 domain"/>
    <property type="match status" value="1"/>
</dbReference>
<dbReference type="SUPFAM" id="SSF50044">
    <property type="entry name" value="SH3-domain"/>
    <property type="match status" value="1"/>
</dbReference>
<dbReference type="PROSITE" id="PS50003">
    <property type="entry name" value="PH_DOMAIN"/>
    <property type="match status" value="1"/>
</dbReference>
<dbReference type="PROSITE" id="PS00107">
    <property type="entry name" value="PROTEIN_KINASE_ATP"/>
    <property type="match status" value="1"/>
</dbReference>
<dbReference type="PROSITE" id="PS50011">
    <property type="entry name" value="PROTEIN_KINASE_DOM"/>
    <property type="match status" value="1"/>
</dbReference>
<dbReference type="PROSITE" id="PS00109">
    <property type="entry name" value="PROTEIN_KINASE_TYR"/>
    <property type="match status" value="1"/>
</dbReference>
<dbReference type="PROSITE" id="PS50001">
    <property type="entry name" value="SH2"/>
    <property type="match status" value="1"/>
</dbReference>
<dbReference type="PROSITE" id="PS50002">
    <property type="entry name" value="SH3"/>
    <property type="match status" value="1"/>
</dbReference>
<dbReference type="PROSITE" id="PS51113">
    <property type="entry name" value="ZF_BTK"/>
    <property type="match status" value="1"/>
</dbReference>
<feature type="initiator methionine" description="Removed" evidence="3">
    <location>
        <position position="1"/>
    </location>
</feature>
<feature type="chain" id="PRO_0000088067" description="Tyrosine-protein kinase BTK">
    <location>
        <begin position="2"/>
        <end position="657"/>
    </location>
</feature>
<feature type="domain" description="PH" evidence="4 14">
    <location>
        <begin position="3"/>
        <end position="132"/>
    </location>
</feature>
<feature type="domain" description="SH3" evidence="7">
    <location>
        <begin position="211"/>
        <end position="271"/>
    </location>
</feature>
<feature type="domain" description="SH2" evidence="6 14">
    <location>
        <begin position="276"/>
        <end position="366"/>
    </location>
</feature>
<feature type="domain" description="Protein kinase" evidence="5 14">
    <location>
        <begin position="400"/>
        <end position="653"/>
    </location>
</feature>
<feature type="zinc finger region" description="Btk-type" evidence="8">
    <location>
        <begin position="134"/>
        <end position="170"/>
    </location>
</feature>
<feature type="region of interest" description="Inositol-(1,3,4,5)-tetrakisphosphate 1-binding" evidence="3">
    <location>
        <begin position="12"/>
        <end position="24"/>
    </location>
</feature>
<feature type="region of interest" description="Disordered" evidence="10">
    <location>
        <begin position="175"/>
        <end position="199"/>
    </location>
</feature>
<feature type="short sequence motif" description="CAV1-binding" evidence="3">
    <location>
        <begin position="579"/>
        <end position="586"/>
    </location>
</feature>
<feature type="active site" description="Proton acceptor" evidence="5 9">
    <location>
        <position position="519"/>
    </location>
</feature>
<feature type="binding site" evidence="3">
    <location>
        <position position="26"/>
    </location>
    <ligand>
        <name>1D-myo-inositol 1,3,4,5-tetrakisphosphate</name>
        <dbReference type="ChEBI" id="CHEBI:57895"/>
    </ligand>
</feature>
<feature type="binding site" evidence="3">
    <location>
        <position position="28"/>
    </location>
    <ligand>
        <name>1D-myo-inositol 1,3,4,5-tetrakisphosphate</name>
        <dbReference type="ChEBI" id="CHEBI:57895"/>
    </ligand>
</feature>
<feature type="binding site" evidence="3">
    <location>
        <position position="39"/>
    </location>
    <ligand>
        <name>1D-myo-inositol 1,3,4,5-tetrakisphosphate</name>
        <dbReference type="ChEBI" id="CHEBI:57895"/>
    </ligand>
</feature>
<feature type="binding site" evidence="3">
    <location>
        <position position="53"/>
    </location>
    <ligand>
        <name>1D-myo-inositol 1,3,4,5-tetrakisphosphate</name>
        <dbReference type="ChEBI" id="CHEBI:57895"/>
    </ligand>
</feature>
<feature type="binding site" evidence="8">
    <location>
        <position position="142"/>
    </location>
    <ligand>
        <name>Zn(2+)</name>
        <dbReference type="ChEBI" id="CHEBI:29105"/>
    </ligand>
</feature>
<feature type="binding site" evidence="8">
    <location>
        <position position="153"/>
    </location>
    <ligand>
        <name>Zn(2+)</name>
        <dbReference type="ChEBI" id="CHEBI:29105"/>
    </ligand>
</feature>
<feature type="binding site" evidence="8">
    <location>
        <position position="154"/>
    </location>
    <ligand>
        <name>Zn(2+)</name>
        <dbReference type="ChEBI" id="CHEBI:29105"/>
    </ligand>
</feature>
<feature type="binding site" evidence="8">
    <location>
        <position position="164"/>
    </location>
    <ligand>
        <name>Zn(2+)</name>
        <dbReference type="ChEBI" id="CHEBI:29105"/>
    </ligand>
</feature>
<feature type="binding site" evidence="1 5">
    <location>
        <begin position="406"/>
        <end position="414"/>
    </location>
    <ligand>
        <name>ATP</name>
        <dbReference type="ChEBI" id="CHEBI:30616"/>
    </ligand>
</feature>
<feature type="binding site" evidence="1 5">
    <location>
        <position position="428"/>
    </location>
    <ligand>
        <name>ATP</name>
        <dbReference type="ChEBI" id="CHEBI:30616"/>
    </ligand>
</feature>
<feature type="modified residue" description="N-acetylalanine" evidence="3">
    <location>
        <position position="2"/>
    </location>
</feature>
<feature type="modified residue" description="Phosphothreonine" evidence="3">
    <location>
        <position position="20"/>
    </location>
</feature>
<feature type="modified residue" description="Phosphoserine" evidence="3">
    <location>
        <position position="21"/>
    </location>
</feature>
<feature type="modified residue" description="Phosphotyrosine" evidence="3">
    <location>
        <position position="40"/>
    </location>
</feature>
<feature type="modified residue" description="Phosphoserine" evidence="3">
    <location>
        <position position="55"/>
    </location>
</feature>
<feature type="modified residue" description="Phosphoserine; by PKC/PRKCB" evidence="3">
    <location>
        <position position="179"/>
    </location>
</feature>
<feature type="modified residue" description="Phosphothreonine" evidence="3">
    <location>
        <position position="190"/>
    </location>
</feature>
<feature type="modified residue" description="Phosphotyrosine; by autocatalysis" evidence="3">
    <location>
        <position position="220"/>
    </location>
</feature>
<feature type="modified residue" description="Phosphoserine" evidence="3">
    <location>
        <position position="306"/>
    </location>
</feature>
<feature type="modified residue" description="Phosphoserine" evidence="3">
    <location>
        <position position="321"/>
    </location>
</feature>
<feature type="modified residue" description="Phosphotyrosine" evidence="3">
    <location>
        <position position="342"/>
    </location>
</feature>
<feature type="modified residue" description="Phosphotyrosine" evidence="3">
    <location>
        <position position="359"/>
    </location>
</feature>
<feature type="modified residue" description="Phosphotyrosine" evidence="3">
    <location>
        <position position="373"/>
    </location>
</feature>
<feature type="modified residue" description="Phosphotyrosine; by autocatalysis" evidence="3">
    <location>
        <position position="549"/>
    </location>
</feature>
<feature type="modified residue" description="Phosphotyrosine; by LYN and SYK" evidence="3">
    <location>
        <position position="549"/>
    </location>
</feature>
<feature type="modified residue" description="Phosphoserine" evidence="3">
    <location>
        <position position="602"/>
    </location>
</feature>
<organism evidence="15">
    <name type="scientific">Gallus gallus</name>
    <name type="common">Chicken</name>
    <dbReference type="NCBI Taxonomy" id="9031"/>
    <lineage>
        <taxon>Eukaryota</taxon>
        <taxon>Metazoa</taxon>
        <taxon>Chordata</taxon>
        <taxon>Craniata</taxon>
        <taxon>Vertebrata</taxon>
        <taxon>Euteleostomi</taxon>
        <taxon>Archelosauria</taxon>
        <taxon>Archosauria</taxon>
        <taxon>Dinosauria</taxon>
        <taxon>Saurischia</taxon>
        <taxon>Theropoda</taxon>
        <taxon>Coelurosauria</taxon>
        <taxon>Aves</taxon>
        <taxon>Neognathae</taxon>
        <taxon>Galloanserae</taxon>
        <taxon>Galliformes</taxon>
        <taxon>Phasianidae</taxon>
        <taxon>Phasianinae</taxon>
        <taxon>Gallus</taxon>
    </lineage>
</organism>
<gene>
    <name type="primary">BTK</name>
</gene>
<name>BTK_CHICK</name>
<comment type="function">
    <text evidence="3 11 12 13">Non-receptor tyrosine kinase indispensable for B lymphocyte development, differentiation and signaling (PubMed:12912915, PubMed:8691147). Binding of antigen to the B-cell antigen receptor (BCR) triggers signaling that ultimately leads to B-cell activation (By similarity). After BCR engagement and activation at the plasma membrane, phosphorylates PLCG2 at several sites, igniting the downstream signaling pathway through calcium mobilization, followed by activation of the protein kinase C (PKC) family members (By similarity). PLCG2 phosphorylation is performed in close cooperation with the adapter protein B-cell linker protein BLNK (By similarity). BTK acts as a platform to bring together a diverse array of signaling proteins and is implicated in cytokine receptor signaling pathways (By similarity). Plays an important role in the function of immune cells of innate as well as adaptive immunity, as a component of the Toll-like receptors (TLR) pathway (By similarity). The TLR pathway acts as a primary surveillance system for the detection of pathogens and are crucial to the activation of host defense (By similarity). Especially, is a critical molecule in regulating TLR9 activation in splenic B-cells (By similarity). Within the TLR pathway, induces tyrosine phosphorylation of TIRAP which leads to TIRAP degradation (By similarity). BTK also plays a critical role in transcription regulation (By similarity). Induces the activity of NF-kappa-B, which is involved in regulating the expression of hundreds of genes (PubMed:10811866). BTK is involved on the signaling pathway linking TLR8 and TLR9 to NF-kappa-B (By similarity). Acts as an activator of NLRP3 inflammasome assembly by mediating phosphorylation of NLRP3 (By similarity). Transiently phosphorylates transcription factor GTF2I on tyrosine residues in response to BCR (By similarity). GTF2I then translocates to the nucleus to bind regulatory enhancer elements to modulate gene expression (By similarity). ARID3A and NFAT are other transcriptional target of BTK (By similarity). BTK is required for the formation of functional ARID3A DNA-binding complexes (By similarity). There is however no evidence that BTK itself binds directly to DNA (By similarity). BTK has a dual role in the regulation of apoptosis (By similarity).</text>
</comment>
<comment type="catalytic activity">
    <reaction evidence="9">
        <text>L-tyrosyl-[protein] + ATP = O-phospho-L-tyrosyl-[protein] + ADP + H(+)</text>
        <dbReference type="Rhea" id="RHEA:10596"/>
        <dbReference type="Rhea" id="RHEA-COMP:10136"/>
        <dbReference type="Rhea" id="RHEA-COMP:20101"/>
        <dbReference type="ChEBI" id="CHEBI:15378"/>
        <dbReference type="ChEBI" id="CHEBI:30616"/>
        <dbReference type="ChEBI" id="CHEBI:46858"/>
        <dbReference type="ChEBI" id="CHEBI:61978"/>
        <dbReference type="ChEBI" id="CHEBI:456216"/>
        <dbReference type="EC" id="2.7.10.2"/>
    </reaction>
</comment>
<comment type="cofactor">
    <cofactor evidence="3">
        <name>Zn(2+)</name>
        <dbReference type="ChEBI" id="CHEBI:29105"/>
    </cofactor>
    <text evidence="3">Binds 1 zinc ion per subunit.</text>
</comment>
<comment type="activity regulation">
    <text evidence="3">Activated by phosphorylation.</text>
</comment>
<comment type="subcellular location">
    <subcellularLocation>
        <location evidence="3">Cytoplasm</location>
    </subcellularLocation>
    <subcellularLocation>
        <location evidence="3">Cell membrane</location>
        <topology evidence="3">Peripheral membrane protein</topology>
    </subcellularLocation>
    <subcellularLocation>
        <location evidence="3">Nucleus</location>
    </subcellularLocation>
    <subcellularLocation>
        <location evidence="2">Membrane raft</location>
    </subcellularLocation>
</comment>
<comment type="domain">
    <text evidence="3">The PH domain mediates the binding to inositol polyphosphate and phosphoinositides, leading to its targeting to the plasma membrane (By similarity). It is extended in the BTK kinase family by a region designated the TH (Tec homology) domain, which consists of about 80 residues preceding the SH3 domain.</text>
</comment>
<comment type="PTM">
    <text evidence="3">Following B-cell receptor (BCR) engagement, translocates to the plasma membrane where it gets phosphorylated at Tyr-549 by LYN and SYK. Phosphorylation at Tyr-549 is followed by autophosphorylation of Tyr-220 which may create a docking site for a SH2 containing protein (By similarity). Phosphorylation at Ser-179 by PRKCB, leads in translocation of BTK back to the cytoplasmic fraction (By similarity).</text>
</comment>
<comment type="similarity">
    <text evidence="5">Belongs to the protein kinase superfamily. Tyr protein kinase family. TEC subfamily.</text>
</comment>